<protein>
    <recommendedName>
        <fullName evidence="1">Large ribosomal subunit protein bL19</fullName>
    </recommendedName>
    <alternativeName>
        <fullName evidence="2">50S ribosomal protein L19</fullName>
    </alternativeName>
</protein>
<accession>B1VG80</accession>
<name>RL19_CORU7</name>
<feature type="chain" id="PRO_1000193815" description="Large ribosomal subunit protein bL19">
    <location>
        <begin position="1"/>
        <end position="113"/>
    </location>
</feature>
<evidence type="ECO:0000255" key="1">
    <source>
        <dbReference type="HAMAP-Rule" id="MF_00402"/>
    </source>
</evidence>
<evidence type="ECO:0000305" key="2"/>
<organism>
    <name type="scientific">Corynebacterium urealyticum (strain ATCC 43042 / DSM 7109)</name>
    <dbReference type="NCBI Taxonomy" id="504474"/>
    <lineage>
        <taxon>Bacteria</taxon>
        <taxon>Bacillati</taxon>
        <taxon>Actinomycetota</taxon>
        <taxon>Actinomycetes</taxon>
        <taxon>Mycobacteriales</taxon>
        <taxon>Corynebacteriaceae</taxon>
        <taxon>Corynebacterium</taxon>
    </lineage>
</organism>
<dbReference type="EMBL" id="AM942444">
    <property type="protein sequence ID" value="CAQ04769.1"/>
    <property type="molecule type" value="Genomic_DNA"/>
</dbReference>
<dbReference type="RefSeq" id="WP_012360058.1">
    <property type="nucleotide sequence ID" value="NC_010545.1"/>
</dbReference>
<dbReference type="SMR" id="B1VG80"/>
<dbReference type="STRING" id="504474.cu0809"/>
<dbReference type="GeneID" id="60603586"/>
<dbReference type="KEGG" id="cur:cu0809"/>
<dbReference type="eggNOG" id="COG0335">
    <property type="taxonomic scope" value="Bacteria"/>
</dbReference>
<dbReference type="HOGENOM" id="CLU_103507_2_1_11"/>
<dbReference type="Proteomes" id="UP000001727">
    <property type="component" value="Chromosome"/>
</dbReference>
<dbReference type="GO" id="GO:0022625">
    <property type="term" value="C:cytosolic large ribosomal subunit"/>
    <property type="evidence" value="ECO:0007669"/>
    <property type="project" value="TreeGrafter"/>
</dbReference>
<dbReference type="GO" id="GO:0003735">
    <property type="term" value="F:structural constituent of ribosome"/>
    <property type="evidence" value="ECO:0007669"/>
    <property type="project" value="InterPro"/>
</dbReference>
<dbReference type="GO" id="GO:0006412">
    <property type="term" value="P:translation"/>
    <property type="evidence" value="ECO:0007669"/>
    <property type="project" value="UniProtKB-UniRule"/>
</dbReference>
<dbReference type="FunFam" id="2.30.30.790:FF:000001">
    <property type="entry name" value="50S ribosomal protein L19"/>
    <property type="match status" value="1"/>
</dbReference>
<dbReference type="Gene3D" id="2.30.30.790">
    <property type="match status" value="1"/>
</dbReference>
<dbReference type="HAMAP" id="MF_00402">
    <property type="entry name" value="Ribosomal_bL19"/>
    <property type="match status" value="1"/>
</dbReference>
<dbReference type="InterPro" id="IPR001857">
    <property type="entry name" value="Ribosomal_bL19"/>
</dbReference>
<dbReference type="InterPro" id="IPR018257">
    <property type="entry name" value="Ribosomal_bL19_CS"/>
</dbReference>
<dbReference type="InterPro" id="IPR038657">
    <property type="entry name" value="Ribosomal_bL19_sf"/>
</dbReference>
<dbReference type="InterPro" id="IPR008991">
    <property type="entry name" value="Translation_prot_SH3-like_sf"/>
</dbReference>
<dbReference type="NCBIfam" id="TIGR01024">
    <property type="entry name" value="rplS_bact"/>
    <property type="match status" value="1"/>
</dbReference>
<dbReference type="PANTHER" id="PTHR15680:SF9">
    <property type="entry name" value="LARGE RIBOSOMAL SUBUNIT PROTEIN BL19M"/>
    <property type="match status" value="1"/>
</dbReference>
<dbReference type="PANTHER" id="PTHR15680">
    <property type="entry name" value="RIBOSOMAL PROTEIN L19"/>
    <property type="match status" value="1"/>
</dbReference>
<dbReference type="Pfam" id="PF01245">
    <property type="entry name" value="Ribosomal_L19"/>
    <property type="match status" value="1"/>
</dbReference>
<dbReference type="PIRSF" id="PIRSF002191">
    <property type="entry name" value="Ribosomal_L19"/>
    <property type="match status" value="1"/>
</dbReference>
<dbReference type="PRINTS" id="PR00061">
    <property type="entry name" value="RIBOSOMALL19"/>
</dbReference>
<dbReference type="SUPFAM" id="SSF50104">
    <property type="entry name" value="Translation proteins SH3-like domain"/>
    <property type="match status" value="1"/>
</dbReference>
<dbReference type="PROSITE" id="PS01015">
    <property type="entry name" value="RIBOSOMAL_L19"/>
    <property type="match status" value="1"/>
</dbReference>
<reference key="1">
    <citation type="journal article" date="2008" name="J. Biotechnol.">
        <title>The lifestyle of Corynebacterium urealyticum derived from its complete genome sequence established by pyrosequencing.</title>
        <authorList>
            <person name="Tauch A."/>
            <person name="Trost E."/>
            <person name="Tilker A."/>
            <person name="Ludewig U."/>
            <person name="Schneiker S."/>
            <person name="Goesmann A."/>
            <person name="Arnold W."/>
            <person name="Bekel T."/>
            <person name="Brinkrolf K."/>
            <person name="Brune I."/>
            <person name="Goetker S."/>
            <person name="Kalinowski J."/>
            <person name="Kamp P.-B."/>
            <person name="Lobo F.P."/>
            <person name="Viehoever P."/>
            <person name="Weisshaar B."/>
            <person name="Soriano F."/>
            <person name="Droege M."/>
            <person name="Puehler A."/>
        </authorList>
    </citation>
    <scope>NUCLEOTIDE SEQUENCE [LARGE SCALE GENOMIC DNA]</scope>
    <source>
        <strain>ATCC 43042 / DSM 7109</strain>
    </source>
</reference>
<comment type="function">
    <text evidence="1">This protein is located at the 30S-50S ribosomal subunit interface and may play a role in the structure and function of the aminoacyl-tRNA binding site.</text>
</comment>
<comment type="similarity">
    <text evidence="1">Belongs to the bacterial ribosomal protein bL19 family.</text>
</comment>
<sequence length="113" mass="12888">MHILDKVDAAQLRDDIPEFRAGDTVDVHLKVIEGSKSRVQVFRGVVIKRQGSGIRETFTVRKVSFGIGVERTIPVHSPNIDKLEVLSRGKVRRAKLYYLRDRHGKAAKIKEKR</sequence>
<gene>
    <name evidence="1" type="primary">rplS</name>
    <name type="ordered locus">cu0809</name>
</gene>
<keyword id="KW-1185">Reference proteome</keyword>
<keyword id="KW-0687">Ribonucleoprotein</keyword>
<keyword id="KW-0689">Ribosomal protein</keyword>
<proteinExistence type="inferred from homology"/>